<protein>
    <recommendedName>
        <fullName evidence="6">Vesicle-associated membrane protein 714</fullName>
        <shortName evidence="6">AtVAMP714</shortName>
    </recommendedName>
</protein>
<accession>Q9FMR5</accession>
<accession>Q93Z99</accession>
<proteinExistence type="evidence at protein level"/>
<gene>
    <name evidence="6" type="primary">VAMP714</name>
    <name evidence="9" type="ordered locus">At5g22360</name>
    <name evidence="10" type="ORF">MWD9.16</name>
</gene>
<dbReference type="EMBL" id="AB007651">
    <property type="protein sequence ID" value="BAB08335.1"/>
    <property type="molecule type" value="Genomic_DNA"/>
</dbReference>
<dbReference type="EMBL" id="CP002688">
    <property type="protein sequence ID" value="AED93017.1"/>
    <property type="molecule type" value="Genomic_DNA"/>
</dbReference>
<dbReference type="EMBL" id="AY057699">
    <property type="protein sequence ID" value="AAL15329.1"/>
    <property type="status" value="ALT_SEQ"/>
    <property type="molecule type" value="mRNA"/>
</dbReference>
<dbReference type="EMBL" id="AY116956">
    <property type="protein sequence ID" value="AAM51590.1"/>
    <property type="status" value="ALT_SEQ"/>
    <property type="molecule type" value="mRNA"/>
</dbReference>
<dbReference type="RefSeq" id="NP_197628.1">
    <property type="nucleotide sequence ID" value="NM_122141.5"/>
</dbReference>
<dbReference type="SMR" id="Q9FMR5"/>
<dbReference type="BioGRID" id="17572">
    <property type="interactions" value="6"/>
</dbReference>
<dbReference type="FunCoup" id="Q9FMR5">
    <property type="interactions" value="3274"/>
</dbReference>
<dbReference type="IntAct" id="Q9FMR5">
    <property type="interactions" value="6"/>
</dbReference>
<dbReference type="STRING" id="3702.Q9FMR5"/>
<dbReference type="iPTMnet" id="Q9FMR5"/>
<dbReference type="PaxDb" id="3702-AT5G22360.1"/>
<dbReference type="ProteomicsDB" id="243252"/>
<dbReference type="EnsemblPlants" id="AT5G22360.1">
    <property type="protein sequence ID" value="AT5G22360.1"/>
    <property type="gene ID" value="AT5G22360"/>
</dbReference>
<dbReference type="GeneID" id="832297"/>
<dbReference type="Gramene" id="AT5G22360.1">
    <property type="protein sequence ID" value="AT5G22360.1"/>
    <property type="gene ID" value="AT5G22360"/>
</dbReference>
<dbReference type="KEGG" id="ath:AT5G22360"/>
<dbReference type="Araport" id="AT5G22360"/>
<dbReference type="TAIR" id="AT5G22360">
    <property type="gene designation" value="VAMP714"/>
</dbReference>
<dbReference type="eggNOG" id="KOG0859">
    <property type="taxonomic scope" value="Eukaryota"/>
</dbReference>
<dbReference type="HOGENOM" id="CLU_064620_1_1_1"/>
<dbReference type="InParanoid" id="Q9FMR5"/>
<dbReference type="OMA" id="NTKLMIM"/>
<dbReference type="OrthoDB" id="248747at2759"/>
<dbReference type="PhylomeDB" id="Q9FMR5"/>
<dbReference type="PRO" id="PR:Q9FMR5"/>
<dbReference type="Proteomes" id="UP000006548">
    <property type="component" value="Chromosome 5"/>
</dbReference>
<dbReference type="ExpressionAtlas" id="Q9FMR5">
    <property type="expression patterns" value="baseline and differential"/>
</dbReference>
<dbReference type="GO" id="GO:0005794">
    <property type="term" value="C:Golgi apparatus"/>
    <property type="evidence" value="ECO:0000304"/>
    <property type="project" value="TAIR"/>
</dbReference>
<dbReference type="GO" id="GO:0000139">
    <property type="term" value="C:Golgi membrane"/>
    <property type="evidence" value="ECO:0007669"/>
    <property type="project" value="UniProtKB-SubCell"/>
</dbReference>
<dbReference type="GO" id="GO:0005773">
    <property type="term" value="C:vacuole"/>
    <property type="evidence" value="ECO:0007005"/>
    <property type="project" value="TAIR"/>
</dbReference>
<dbReference type="GO" id="GO:0015031">
    <property type="term" value="P:protein transport"/>
    <property type="evidence" value="ECO:0007669"/>
    <property type="project" value="UniProtKB-KW"/>
</dbReference>
<dbReference type="GO" id="GO:0009651">
    <property type="term" value="P:response to salt stress"/>
    <property type="evidence" value="ECO:0000315"/>
    <property type="project" value="TAIR"/>
</dbReference>
<dbReference type="GO" id="GO:0016192">
    <property type="term" value="P:vesicle-mediated transport"/>
    <property type="evidence" value="ECO:0007669"/>
    <property type="project" value="InterPro"/>
</dbReference>
<dbReference type="CDD" id="cd14824">
    <property type="entry name" value="Longin"/>
    <property type="match status" value="1"/>
</dbReference>
<dbReference type="CDD" id="cd15843">
    <property type="entry name" value="R-SNARE"/>
    <property type="match status" value="1"/>
</dbReference>
<dbReference type="FunFam" id="1.20.5.110:FF:000004">
    <property type="entry name" value="Vesicle-associated membrane protein 7"/>
    <property type="match status" value="1"/>
</dbReference>
<dbReference type="FunFam" id="3.30.450.50:FF:000011">
    <property type="entry name" value="Vesicle-associated membrane protein 714"/>
    <property type="match status" value="1"/>
</dbReference>
<dbReference type="Gene3D" id="1.20.5.110">
    <property type="match status" value="1"/>
</dbReference>
<dbReference type="Gene3D" id="3.30.450.50">
    <property type="entry name" value="Longin domain"/>
    <property type="match status" value="1"/>
</dbReference>
<dbReference type="InterPro" id="IPR011012">
    <property type="entry name" value="Longin-like_dom_sf"/>
</dbReference>
<dbReference type="InterPro" id="IPR010908">
    <property type="entry name" value="Longin_dom"/>
</dbReference>
<dbReference type="InterPro" id="IPR001388">
    <property type="entry name" value="Synaptobrevin-like"/>
</dbReference>
<dbReference type="InterPro" id="IPR051097">
    <property type="entry name" value="Synaptobrevin-like_transport"/>
</dbReference>
<dbReference type="InterPro" id="IPR042855">
    <property type="entry name" value="V_SNARE_CC"/>
</dbReference>
<dbReference type="PANTHER" id="PTHR21136">
    <property type="entry name" value="SNARE PROTEINS"/>
    <property type="match status" value="1"/>
</dbReference>
<dbReference type="PANTHER" id="PTHR21136:SF214">
    <property type="entry name" value="VESICLE-ASSOCIATED MEMBRANE PROTEIN 714"/>
    <property type="match status" value="1"/>
</dbReference>
<dbReference type="Pfam" id="PF13774">
    <property type="entry name" value="Longin"/>
    <property type="match status" value="1"/>
</dbReference>
<dbReference type="Pfam" id="PF00957">
    <property type="entry name" value="Synaptobrevin"/>
    <property type="match status" value="1"/>
</dbReference>
<dbReference type="PRINTS" id="PR00219">
    <property type="entry name" value="SYNAPTOBREVN"/>
</dbReference>
<dbReference type="SMART" id="SM01270">
    <property type="entry name" value="Longin"/>
    <property type="match status" value="1"/>
</dbReference>
<dbReference type="SUPFAM" id="SSF58038">
    <property type="entry name" value="SNARE fusion complex"/>
    <property type="match status" value="1"/>
</dbReference>
<dbReference type="SUPFAM" id="SSF64356">
    <property type="entry name" value="SNARE-like"/>
    <property type="match status" value="1"/>
</dbReference>
<dbReference type="PROSITE" id="PS50859">
    <property type="entry name" value="LONGIN"/>
    <property type="match status" value="1"/>
</dbReference>
<dbReference type="PROSITE" id="PS00417">
    <property type="entry name" value="SYNAPTOBREVIN"/>
    <property type="match status" value="1"/>
</dbReference>
<dbReference type="PROSITE" id="PS50892">
    <property type="entry name" value="V_SNARE"/>
    <property type="match status" value="1"/>
</dbReference>
<comment type="function">
    <text evidence="8">Involved in the targeting and/or fusion of transport vesicles to their target membrane.</text>
</comment>
<comment type="subcellular location">
    <subcellularLocation>
        <location evidence="5">Golgi apparatus membrane</location>
        <topology evidence="1">Single-pass type IV membrane protein</topology>
    </subcellularLocation>
</comment>
<comment type="tissue specificity">
    <text evidence="5">Highly expressed in leaves, stems and roots. Detected in flowers.</text>
</comment>
<comment type="similarity">
    <text evidence="7">Belongs to the synaptobrevin family.</text>
</comment>
<comment type="sequence caution" evidence="7">
    <conflict type="miscellaneous discrepancy">
        <sequence resource="EMBL-CDS" id="AAL15329"/>
    </conflict>
    <text>Intron retention.</text>
</comment>
<comment type="sequence caution" evidence="7">
    <conflict type="miscellaneous discrepancy">
        <sequence resource="EMBL-CDS" id="AAM51590"/>
    </conflict>
    <text>Intron retention.</text>
</comment>
<organism>
    <name type="scientific">Arabidopsis thaliana</name>
    <name type="common">Mouse-ear cress</name>
    <dbReference type="NCBI Taxonomy" id="3702"/>
    <lineage>
        <taxon>Eukaryota</taxon>
        <taxon>Viridiplantae</taxon>
        <taxon>Streptophyta</taxon>
        <taxon>Embryophyta</taxon>
        <taxon>Tracheophyta</taxon>
        <taxon>Spermatophyta</taxon>
        <taxon>Magnoliopsida</taxon>
        <taxon>eudicotyledons</taxon>
        <taxon>Gunneridae</taxon>
        <taxon>Pentapetalae</taxon>
        <taxon>rosids</taxon>
        <taxon>malvids</taxon>
        <taxon>Brassicales</taxon>
        <taxon>Brassicaceae</taxon>
        <taxon>Camelineae</taxon>
        <taxon>Arabidopsis</taxon>
    </lineage>
</organism>
<name>VA714_ARATH</name>
<evidence type="ECO:0000250" key="1">
    <source>
        <dbReference type="UniProtKB" id="Q12255"/>
    </source>
</evidence>
<evidence type="ECO:0000255" key="2"/>
<evidence type="ECO:0000255" key="3">
    <source>
        <dbReference type="PROSITE-ProRule" id="PRU00231"/>
    </source>
</evidence>
<evidence type="ECO:0000255" key="4">
    <source>
        <dbReference type="PROSITE-ProRule" id="PRU00290"/>
    </source>
</evidence>
<evidence type="ECO:0000269" key="5">
    <source>
    </source>
</evidence>
<evidence type="ECO:0000303" key="6">
    <source>
    </source>
</evidence>
<evidence type="ECO:0000305" key="7"/>
<evidence type="ECO:0000305" key="8">
    <source>
    </source>
</evidence>
<evidence type="ECO:0000312" key="9">
    <source>
        <dbReference type="Araport" id="AT5G22360"/>
    </source>
</evidence>
<evidence type="ECO:0000312" key="10">
    <source>
        <dbReference type="EMBL" id="BAB08335.1"/>
    </source>
</evidence>
<evidence type="ECO:0007744" key="11">
    <source>
    </source>
</evidence>
<keyword id="KW-0007">Acetylation</keyword>
<keyword id="KW-0175">Coiled coil</keyword>
<keyword id="KW-0333">Golgi apparatus</keyword>
<keyword id="KW-0472">Membrane</keyword>
<keyword id="KW-0653">Protein transport</keyword>
<keyword id="KW-1185">Reference proteome</keyword>
<keyword id="KW-0812">Transmembrane</keyword>
<keyword id="KW-1133">Transmembrane helix</keyword>
<keyword id="KW-0813">Transport</keyword>
<reference key="1">
    <citation type="journal article" date="1997" name="DNA Res.">
        <title>Structural analysis of Arabidopsis thaliana chromosome 5. III. Sequence features of the regions of 1,191,918 bp covered by seventeen physically assigned P1 clones.</title>
        <authorList>
            <person name="Nakamura Y."/>
            <person name="Sato S."/>
            <person name="Kaneko T."/>
            <person name="Kotani H."/>
            <person name="Asamizu E."/>
            <person name="Miyajima N."/>
            <person name="Tabata S."/>
        </authorList>
    </citation>
    <scope>NUCLEOTIDE SEQUENCE [LARGE SCALE GENOMIC DNA]</scope>
    <source>
        <strain>cv. Columbia</strain>
    </source>
</reference>
<reference key="2">
    <citation type="journal article" date="2017" name="Plant J.">
        <title>Araport11: a complete reannotation of the Arabidopsis thaliana reference genome.</title>
        <authorList>
            <person name="Cheng C.Y."/>
            <person name="Krishnakumar V."/>
            <person name="Chan A.P."/>
            <person name="Thibaud-Nissen F."/>
            <person name="Schobel S."/>
            <person name="Town C.D."/>
        </authorList>
    </citation>
    <scope>GENOME REANNOTATION</scope>
    <source>
        <strain>cv. Columbia</strain>
    </source>
</reference>
<reference key="3">
    <citation type="journal article" date="2003" name="Science">
        <title>Empirical analysis of transcriptional activity in the Arabidopsis genome.</title>
        <authorList>
            <person name="Yamada K."/>
            <person name="Lim J."/>
            <person name="Dale J.M."/>
            <person name="Chen H."/>
            <person name="Shinn P."/>
            <person name="Palm C.J."/>
            <person name="Southwick A.M."/>
            <person name="Wu H.C."/>
            <person name="Kim C.J."/>
            <person name="Nguyen M."/>
            <person name="Pham P.K."/>
            <person name="Cheuk R.F."/>
            <person name="Karlin-Newmann G."/>
            <person name="Liu S.X."/>
            <person name="Lam B."/>
            <person name="Sakano H."/>
            <person name="Wu T."/>
            <person name="Yu G."/>
            <person name="Miranda M."/>
            <person name="Quach H.L."/>
            <person name="Tripp M."/>
            <person name="Chang C.H."/>
            <person name="Lee J.M."/>
            <person name="Toriumi M.J."/>
            <person name="Chan M.M."/>
            <person name="Tang C.C."/>
            <person name="Onodera C.S."/>
            <person name="Deng J.M."/>
            <person name="Akiyama K."/>
            <person name="Ansari Y."/>
            <person name="Arakawa T."/>
            <person name="Banh J."/>
            <person name="Banno F."/>
            <person name="Bowser L."/>
            <person name="Brooks S.Y."/>
            <person name="Carninci P."/>
            <person name="Chao Q."/>
            <person name="Choy N."/>
            <person name="Enju A."/>
            <person name="Goldsmith A.D."/>
            <person name="Gurjal M."/>
            <person name="Hansen N.F."/>
            <person name="Hayashizaki Y."/>
            <person name="Johnson-Hopson C."/>
            <person name="Hsuan V.W."/>
            <person name="Iida K."/>
            <person name="Karnes M."/>
            <person name="Khan S."/>
            <person name="Koesema E."/>
            <person name="Ishida J."/>
            <person name="Jiang P.X."/>
            <person name="Jones T."/>
            <person name="Kawai J."/>
            <person name="Kamiya A."/>
            <person name="Meyers C."/>
            <person name="Nakajima M."/>
            <person name="Narusaka M."/>
            <person name="Seki M."/>
            <person name="Sakurai T."/>
            <person name="Satou M."/>
            <person name="Tamse R."/>
            <person name="Vaysberg M."/>
            <person name="Wallender E.K."/>
            <person name="Wong C."/>
            <person name="Yamamura Y."/>
            <person name="Yuan S."/>
            <person name="Shinozaki K."/>
            <person name="Davis R.W."/>
            <person name="Theologis A."/>
            <person name="Ecker J.R."/>
        </authorList>
    </citation>
    <scope>NUCLEOTIDE SEQUENCE [LARGE SCALE MRNA]</scope>
    <source>
        <strain>cv. Columbia</strain>
    </source>
</reference>
<reference key="4">
    <citation type="journal article" date="2000" name="Plant Physiol.">
        <title>The Arabidopsis genome. An abundance of soluble N-ethylmaleimide-sensitive factor adaptor protein receptors.</title>
        <authorList>
            <person name="Sanderfoot A.A."/>
            <person name="Assaad F.F."/>
            <person name="Raikhel N.V."/>
        </authorList>
    </citation>
    <scope>GENE FAMILY</scope>
    <scope>NOMENCLATURE</scope>
</reference>
<reference key="5">
    <citation type="journal article" date="2004" name="Cell Struct. Funct.">
        <title>Systematic analysis of SNARE molecules in Arabidopsis: dissection of the post-Golgi network in plant cells.</title>
        <authorList>
            <person name="Uemura T."/>
            <person name="Ueda T."/>
            <person name="Ohniwa R.L."/>
            <person name="Nakano A."/>
            <person name="Takeyasu K."/>
            <person name="Sato M.H."/>
        </authorList>
    </citation>
    <scope>TISSUE SPECIFICITY</scope>
    <scope>SUBCELLULAR LOCATION</scope>
</reference>
<reference key="6">
    <citation type="journal article" date="2012" name="Mol. Cell. Proteomics">
        <title>Comparative large-scale characterisation of plant vs. mammal proteins reveals similar and idiosyncratic N-alpha acetylation features.</title>
        <authorList>
            <person name="Bienvenut W.V."/>
            <person name="Sumpton D."/>
            <person name="Martinez A."/>
            <person name="Lilla S."/>
            <person name="Espagne C."/>
            <person name="Meinnel T."/>
            <person name="Giglione C."/>
        </authorList>
    </citation>
    <scope>ACETYLATION [LARGE SCALE ANALYSIS] AT ALA-2</scope>
    <scope>CLEAVAGE OF INITIATOR METHIONINE [LARGE SCALE ANALYSIS]</scope>
    <scope>IDENTIFICATION BY MASS SPECTROMETRY [LARGE SCALE ANALYSIS]</scope>
</reference>
<sequence>MAIVYAVVARGTVVLAEFSAVTGNTGAVVRRILEKLSPEISDERLCFSQDRYIFHILRSDGLTFLCMANDTFGRRVPFSYLEEIHMRFMKNYGKVAHNAPAYAMNDEFSRVLHQQMEFFSSNPSVDTLNRVRGEVSEIRSVMVENIEKIMERGDRIELLVDKTATMQDSSFHFRKQSKRLRRALWMKNAKLLVLLTCLIVFLLYIIIASFCGGITLPSCRS</sequence>
<feature type="initiator methionine" description="Removed" evidence="11">
    <location>
        <position position="1"/>
    </location>
</feature>
<feature type="chain" id="PRO_0000206753" description="Vesicle-associated membrane protein 714">
    <location>
        <begin position="2"/>
        <end position="221"/>
    </location>
</feature>
<feature type="topological domain" description="Cytoplasmic" evidence="2">
    <location>
        <begin position="2"/>
        <end position="190"/>
    </location>
</feature>
<feature type="transmembrane region" description="Helical; Anchor for type IV membrane protein" evidence="2">
    <location>
        <begin position="191"/>
        <end position="211"/>
    </location>
</feature>
<feature type="topological domain" description="Vesicular" evidence="2">
    <location>
        <begin position="212"/>
        <end position="221"/>
    </location>
</feature>
<feature type="domain" description="Longin" evidence="3">
    <location>
        <begin position="7"/>
        <end position="112"/>
    </location>
</feature>
<feature type="domain" description="v-SNARE coiled-coil homology" evidence="4">
    <location>
        <begin position="127"/>
        <end position="187"/>
    </location>
</feature>
<feature type="modified residue" description="N-acetylalanine" evidence="11">
    <location>
        <position position="2"/>
    </location>
</feature>